<sequence length="271" mass="30270">MSGGLDILSLKEDDITKMLVATTHLGSENVNFQMEQYVFKRRADGVNIINLGKTWEKLVLAARAIVAIENASDVFVISSRPIGQRAVLKFAKYTDTTPIAGRFTPGAFTNQIQPAFREPRLLVVTDPNTDHQPIMEASYVNIPVIAFTNTDSPLRYIDIAIPCNNKSPHSIGLMWWLLAREVLRLRGTISRTTEWPVVVDLFFYRDPEEAEKEEAAAAKELLPPPKIEEAVDHPVEETTNWADEVAAETVGGVEDWNEDTVKTSWGSDGQF</sequence>
<comment type="function">
    <text evidence="1">Required for the assembly and/or stability of the 40S ribosomal subunit. Required for the processing of the 20S rRNA-precursor to mature 18S rRNA in a late step of the maturation of 40S ribosomal subunits. Required during oogenesis and imaginal development.</text>
</comment>
<comment type="subunit">
    <text evidence="1">Component of the small ribosomal subunit. Mature ribosomes consist of a small (40S) and a large (60S) subunit. The 40S subunit contains about 33 different proteins and 1 molecule of RNA (18S). The 60S subunit contains about 49 different proteins and 3 molecules of RNA (28S, 5.8S and 5S). Interacts with oho23B/rpS21.</text>
</comment>
<comment type="subcellular location">
    <subcellularLocation>
        <location evidence="1">Cytoplasm</location>
    </subcellularLocation>
    <subcellularLocation>
        <location evidence="1">Nucleus</location>
    </subcellularLocation>
    <text evidence="1">May associate with nascent RNP complexes within the nucleus.</text>
</comment>
<comment type="similarity">
    <text evidence="1">Belongs to the universal ribosomal protein uS2 family.</text>
</comment>
<reference key="1">
    <citation type="journal article" date="2007" name="Nature">
        <title>Evolution of genes and genomes on the Drosophila phylogeny.</title>
        <authorList>
            <consortium name="Drosophila 12 genomes consortium"/>
        </authorList>
    </citation>
    <scope>NUCLEOTIDE SEQUENCE [LARGE SCALE GENOMIC DNA]</scope>
    <source>
        <strain>Tucson 15081-1352.22</strain>
    </source>
</reference>
<proteinExistence type="inferred from homology"/>
<accession>B4L760</accession>
<organism>
    <name type="scientific">Drosophila mojavensis</name>
    <name type="common">Fruit fly</name>
    <dbReference type="NCBI Taxonomy" id="7230"/>
    <lineage>
        <taxon>Eukaryota</taxon>
        <taxon>Metazoa</taxon>
        <taxon>Ecdysozoa</taxon>
        <taxon>Arthropoda</taxon>
        <taxon>Hexapoda</taxon>
        <taxon>Insecta</taxon>
        <taxon>Pterygota</taxon>
        <taxon>Neoptera</taxon>
        <taxon>Endopterygota</taxon>
        <taxon>Diptera</taxon>
        <taxon>Brachycera</taxon>
        <taxon>Muscomorpha</taxon>
        <taxon>Ephydroidea</taxon>
        <taxon>Drosophilidae</taxon>
        <taxon>Drosophila</taxon>
    </lineage>
</organism>
<dbReference type="EMBL" id="CH933812">
    <property type="protein sequence ID" value="EDW06206.1"/>
    <property type="molecule type" value="Genomic_DNA"/>
</dbReference>
<dbReference type="SMR" id="B4L760"/>
<dbReference type="FunCoup" id="B4L760">
    <property type="interactions" value="1279"/>
</dbReference>
<dbReference type="EnsemblMetazoa" id="FBtr0166765">
    <property type="protein sequence ID" value="FBpp0165257"/>
    <property type="gene ID" value="FBgn0138789"/>
</dbReference>
<dbReference type="EnsemblMetazoa" id="XM_002011328.4">
    <property type="protein sequence ID" value="XP_002011364.1"/>
    <property type="gene ID" value="LOC6585737"/>
</dbReference>
<dbReference type="GeneID" id="6585737"/>
<dbReference type="KEGG" id="dmo:Dmoj_GI16040"/>
<dbReference type="CTD" id="104044"/>
<dbReference type="eggNOG" id="KOG0830">
    <property type="taxonomic scope" value="Eukaryota"/>
</dbReference>
<dbReference type="HOGENOM" id="CLU_058171_1_0_1"/>
<dbReference type="InParanoid" id="B4L760"/>
<dbReference type="OMA" id="VKNFFEP"/>
<dbReference type="OrthoDB" id="414863at2759"/>
<dbReference type="PhylomeDB" id="B4L760"/>
<dbReference type="ChiTaRS" id="sta">
    <property type="organism name" value="fly"/>
</dbReference>
<dbReference type="Proteomes" id="UP000009192">
    <property type="component" value="Unassembled WGS sequence"/>
</dbReference>
<dbReference type="GO" id="GO:0022627">
    <property type="term" value="C:cytosolic small ribosomal subunit"/>
    <property type="evidence" value="ECO:0007669"/>
    <property type="project" value="UniProtKB-UniRule"/>
</dbReference>
<dbReference type="GO" id="GO:0005634">
    <property type="term" value="C:nucleus"/>
    <property type="evidence" value="ECO:0007669"/>
    <property type="project" value="UniProtKB-SubCell"/>
</dbReference>
<dbReference type="GO" id="GO:0043022">
    <property type="term" value="F:ribosome binding"/>
    <property type="evidence" value="ECO:0007669"/>
    <property type="project" value="EnsemblMetazoa"/>
</dbReference>
<dbReference type="GO" id="GO:0003735">
    <property type="term" value="F:structural constituent of ribosome"/>
    <property type="evidence" value="ECO:0007669"/>
    <property type="project" value="UniProtKB-UniRule"/>
</dbReference>
<dbReference type="GO" id="GO:0000028">
    <property type="term" value="P:ribosomal small subunit assembly"/>
    <property type="evidence" value="ECO:0007669"/>
    <property type="project" value="UniProtKB-UniRule"/>
</dbReference>
<dbReference type="GO" id="GO:0006412">
    <property type="term" value="P:translation"/>
    <property type="evidence" value="ECO:0007669"/>
    <property type="project" value="UniProtKB-UniRule"/>
</dbReference>
<dbReference type="CDD" id="cd01425">
    <property type="entry name" value="RPS2"/>
    <property type="match status" value="1"/>
</dbReference>
<dbReference type="FunFam" id="3.40.50.10490:FF:000012">
    <property type="entry name" value="40S ribosomal protein SA"/>
    <property type="match status" value="1"/>
</dbReference>
<dbReference type="Gene3D" id="3.40.50.10490">
    <property type="entry name" value="Glucose-6-phosphate isomerase like protein, domain 1"/>
    <property type="match status" value="1"/>
</dbReference>
<dbReference type="HAMAP" id="MF_03015">
    <property type="entry name" value="Ribosomal_S2_euk"/>
    <property type="match status" value="1"/>
</dbReference>
<dbReference type="InterPro" id="IPR001865">
    <property type="entry name" value="Ribosomal_uS2"/>
</dbReference>
<dbReference type="InterPro" id="IPR032281">
    <property type="entry name" value="Ribosomal_uS2_C"/>
</dbReference>
<dbReference type="InterPro" id="IPR018130">
    <property type="entry name" value="Ribosomal_uS2_CS"/>
</dbReference>
<dbReference type="InterPro" id="IPR027498">
    <property type="entry name" value="Ribosomal_uS2_euk"/>
</dbReference>
<dbReference type="InterPro" id="IPR005707">
    <property type="entry name" value="Ribosomal_uS2_euk/arc"/>
</dbReference>
<dbReference type="InterPro" id="IPR023591">
    <property type="entry name" value="Ribosomal_uS2_flav_dom_sf"/>
</dbReference>
<dbReference type="NCBIfam" id="TIGR01012">
    <property type="entry name" value="uS2_euk_arch"/>
    <property type="match status" value="1"/>
</dbReference>
<dbReference type="PANTHER" id="PTHR11489">
    <property type="entry name" value="40S RIBOSOMAL PROTEIN SA"/>
    <property type="match status" value="1"/>
</dbReference>
<dbReference type="Pfam" id="PF16122">
    <property type="entry name" value="40S_SA_C"/>
    <property type="match status" value="1"/>
</dbReference>
<dbReference type="Pfam" id="PF00318">
    <property type="entry name" value="Ribosomal_S2"/>
    <property type="match status" value="2"/>
</dbReference>
<dbReference type="PRINTS" id="PR00395">
    <property type="entry name" value="RIBOSOMALS2"/>
</dbReference>
<dbReference type="SUPFAM" id="SSF52313">
    <property type="entry name" value="Ribosomal protein S2"/>
    <property type="match status" value="1"/>
</dbReference>
<dbReference type="PROSITE" id="PS00962">
    <property type="entry name" value="RIBOSOMAL_S2_1"/>
    <property type="match status" value="1"/>
</dbReference>
<dbReference type="PROSITE" id="PS00963">
    <property type="entry name" value="RIBOSOMAL_S2_2"/>
    <property type="match status" value="1"/>
</dbReference>
<gene>
    <name evidence="1" type="primary">sta</name>
    <name type="ORF">GI16040</name>
</gene>
<name>RSSA_DROMO</name>
<protein>
    <recommendedName>
        <fullName evidence="1">Small ribosomal subunit protein uS2</fullName>
    </recommendedName>
    <alternativeName>
        <fullName evidence="3">40S ribosomal protein SA</fullName>
    </alternativeName>
    <alternativeName>
        <fullName evidence="1">Protein stubarista</fullName>
    </alternativeName>
</protein>
<keyword id="KW-0963">Cytoplasm</keyword>
<keyword id="KW-0217">Developmental protein</keyword>
<keyword id="KW-0539">Nucleus</keyword>
<keyword id="KW-1185">Reference proteome</keyword>
<keyword id="KW-0687">Ribonucleoprotein</keyword>
<keyword id="KW-0689">Ribosomal protein</keyword>
<feature type="initiator methionine" description="Removed" evidence="1">
    <location>
        <position position="1"/>
    </location>
</feature>
<feature type="chain" id="PRO_0000371583" description="Small ribosomal subunit protein uS2">
    <location>
        <begin position="2"/>
        <end position="271"/>
    </location>
</feature>
<feature type="region of interest" description="Disordered" evidence="2">
    <location>
        <begin position="249"/>
        <end position="271"/>
    </location>
</feature>
<feature type="compositionally biased region" description="Polar residues" evidence="2">
    <location>
        <begin position="262"/>
        <end position="271"/>
    </location>
</feature>
<evidence type="ECO:0000255" key="1">
    <source>
        <dbReference type="HAMAP-Rule" id="MF_03015"/>
    </source>
</evidence>
<evidence type="ECO:0000256" key="2">
    <source>
        <dbReference type="SAM" id="MobiDB-lite"/>
    </source>
</evidence>
<evidence type="ECO:0000305" key="3"/>